<keyword id="KW-0067">ATP-binding</keyword>
<keyword id="KW-0436">Ligase</keyword>
<keyword id="KW-0460">Magnesium</keyword>
<keyword id="KW-0479">Metal-binding</keyword>
<keyword id="KW-0547">Nucleotide-binding</keyword>
<keyword id="KW-0833">Ubl conjugation pathway</keyword>
<dbReference type="EC" id="6.3.1.19" evidence="1"/>
<dbReference type="EMBL" id="CP000384">
    <property type="protein sequence ID" value="ABG08575.1"/>
    <property type="molecule type" value="Genomic_DNA"/>
</dbReference>
<dbReference type="SMR" id="Q1B959"/>
<dbReference type="KEGG" id="mmc:Mmcs_2467"/>
<dbReference type="HOGENOM" id="CLU_040524_0_1_11"/>
<dbReference type="BioCyc" id="MSP164756:G1G6O-2518-MONOMER"/>
<dbReference type="UniPathway" id="UPA00997"/>
<dbReference type="UniPathway" id="UPA00998"/>
<dbReference type="GO" id="GO:0005524">
    <property type="term" value="F:ATP binding"/>
    <property type="evidence" value="ECO:0007669"/>
    <property type="project" value="UniProtKB-UniRule"/>
</dbReference>
<dbReference type="GO" id="GO:0016879">
    <property type="term" value="F:ligase activity, forming carbon-nitrogen bonds"/>
    <property type="evidence" value="ECO:0007669"/>
    <property type="project" value="InterPro"/>
</dbReference>
<dbReference type="GO" id="GO:0000287">
    <property type="term" value="F:magnesium ion binding"/>
    <property type="evidence" value="ECO:0007669"/>
    <property type="project" value="UniProtKB-UniRule"/>
</dbReference>
<dbReference type="GO" id="GO:0019787">
    <property type="term" value="F:ubiquitin-like protein transferase activity"/>
    <property type="evidence" value="ECO:0007669"/>
    <property type="project" value="UniProtKB-UniRule"/>
</dbReference>
<dbReference type="GO" id="GO:0019941">
    <property type="term" value="P:modification-dependent protein catabolic process"/>
    <property type="evidence" value="ECO:0007669"/>
    <property type="project" value="UniProtKB-UniRule"/>
</dbReference>
<dbReference type="GO" id="GO:0010498">
    <property type="term" value="P:proteasomal protein catabolic process"/>
    <property type="evidence" value="ECO:0007669"/>
    <property type="project" value="UniProtKB-UniRule"/>
</dbReference>
<dbReference type="GO" id="GO:0070490">
    <property type="term" value="P:protein pupylation"/>
    <property type="evidence" value="ECO:0007669"/>
    <property type="project" value="UniProtKB-UniRule"/>
</dbReference>
<dbReference type="HAMAP" id="MF_02111">
    <property type="entry name" value="Pup_ligase"/>
    <property type="match status" value="1"/>
</dbReference>
<dbReference type="InterPro" id="IPR022279">
    <property type="entry name" value="Pup_ligase"/>
</dbReference>
<dbReference type="InterPro" id="IPR004347">
    <property type="entry name" value="Pup_ligase/deamidase"/>
</dbReference>
<dbReference type="NCBIfam" id="TIGR03686">
    <property type="entry name" value="pupylate_PafA"/>
    <property type="match status" value="1"/>
</dbReference>
<dbReference type="PANTHER" id="PTHR42307">
    <property type="entry name" value="PUP DEAMIDASE/DEPUPYLASE"/>
    <property type="match status" value="1"/>
</dbReference>
<dbReference type="PANTHER" id="PTHR42307:SF3">
    <property type="entry name" value="PUP--PROTEIN LIGASE"/>
    <property type="match status" value="1"/>
</dbReference>
<dbReference type="Pfam" id="PF03136">
    <property type="entry name" value="Pup_ligase"/>
    <property type="match status" value="1"/>
</dbReference>
<dbReference type="PIRSF" id="PIRSF018077">
    <property type="entry name" value="UCP018077"/>
    <property type="match status" value="1"/>
</dbReference>
<proteinExistence type="inferred from homology"/>
<organism>
    <name type="scientific">Mycobacterium sp. (strain MCS)</name>
    <dbReference type="NCBI Taxonomy" id="164756"/>
    <lineage>
        <taxon>Bacteria</taxon>
        <taxon>Bacillati</taxon>
        <taxon>Actinomycetota</taxon>
        <taxon>Actinomycetes</taxon>
        <taxon>Mycobacteriales</taxon>
        <taxon>Mycobacteriaceae</taxon>
        <taxon>Mycobacterium</taxon>
    </lineage>
</organism>
<reference key="1">
    <citation type="submission" date="2006-06" db="EMBL/GenBank/DDBJ databases">
        <title>Complete sequence of chromosome of Mycobacterium sp. MCS.</title>
        <authorList>
            <consortium name="US DOE Joint Genome Institute"/>
            <person name="Copeland A."/>
            <person name="Lucas S."/>
            <person name="Lapidus A."/>
            <person name="Barry K."/>
            <person name="Detter J.C."/>
            <person name="Glavina del Rio T."/>
            <person name="Hammon N."/>
            <person name="Israni S."/>
            <person name="Dalin E."/>
            <person name="Tice H."/>
            <person name="Pitluck S."/>
            <person name="Martinez M."/>
            <person name="Schmutz J."/>
            <person name="Larimer F."/>
            <person name="Land M."/>
            <person name="Hauser L."/>
            <person name="Kyrpides N."/>
            <person name="Kim E."/>
            <person name="Miller C.D."/>
            <person name="Hughes J.E."/>
            <person name="Anderson A.J."/>
            <person name="Sims R.C."/>
            <person name="Richardson P."/>
        </authorList>
    </citation>
    <scope>NUCLEOTIDE SEQUENCE [LARGE SCALE GENOMIC DNA]</scope>
    <source>
        <strain>MCS</strain>
    </source>
</reference>
<protein>
    <recommendedName>
        <fullName evidence="1">Pup--protein ligase</fullName>
        <ecNumber evidence="1">6.3.1.19</ecNumber>
    </recommendedName>
    <alternativeName>
        <fullName evidence="1">Proteasome accessory factor A</fullName>
    </alternativeName>
    <alternativeName>
        <fullName evidence="1">Pup-conjugating enzyme</fullName>
    </alternativeName>
</protein>
<name>PAFA_MYCSS</name>
<gene>
    <name evidence="1" type="primary">pafA</name>
    <name type="ordered locus">Mmcs_2467</name>
</gene>
<accession>Q1B959</accession>
<sequence length="452" mass="51389">MQRRIMGIETEFGVTCTFHGHRRLSPDEVARYLFRRVVSWGRSSNVFLRNGARLYLDVGSHPEYATAECDNLIQLVTHDRAGERVLEDLLIDAEQRLADEGIGGDIYLFKNNTDSAGNSYGCHENYLIVRAGEFSRISDVLLPFLVTRQLICGAGKVLQTPKAATFCLSQRAEHIWEGVSSATTRSRPIINTRDEPHADAEKYRRLHVIVGDSNMCESTTMLKVGTASLVLEMIEAGVPFRDFSLDNPIRAIREVSHDLTGRRPVRLAGGRQASALDIQREYYSRAVDYLQTREPNSQIEQVVDLWGRQLDAVESQDFAKVDTEIDWVIKRKLFQRYQDRYNMELSDPKISQLDLAYHDIKRGRGVFDLLQRKGLAARITTDEEIDAAVDTPPQTTRAKLRGEFISAAQEAGRDFTVDWVHLKLNDQAQRTVLCKDPFRSVDERVKRLIASM</sequence>
<feature type="chain" id="PRO_0000395934" description="Pup--protein ligase">
    <location>
        <begin position="1"/>
        <end position="452"/>
    </location>
</feature>
<feature type="active site" description="Proton acceptor" evidence="1">
    <location>
        <position position="57"/>
    </location>
</feature>
<feature type="binding site" evidence="1">
    <location>
        <position position="9"/>
    </location>
    <ligand>
        <name>Mg(2+)</name>
        <dbReference type="ChEBI" id="CHEBI:18420"/>
    </ligand>
</feature>
<feature type="binding site" evidence="1">
    <location>
        <position position="53"/>
    </location>
    <ligand>
        <name>ATP</name>
        <dbReference type="ChEBI" id="CHEBI:30616"/>
    </ligand>
</feature>
<feature type="binding site" evidence="1">
    <location>
        <position position="55"/>
    </location>
    <ligand>
        <name>Mg(2+)</name>
        <dbReference type="ChEBI" id="CHEBI:18420"/>
    </ligand>
</feature>
<feature type="binding site" evidence="1">
    <location>
        <position position="63"/>
    </location>
    <ligand>
        <name>Mg(2+)</name>
        <dbReference type="ChEBI" id="CHEBI:18420"/>
    </ligand>
</feature>
<feature type="binding site" evidence="1">
    <location>
        <position position="66"/>
    </location>
    <ligand>
        <name>ATP</name>
        <dbReference type="ChEBI" id="CHEBI:30616"/>
    </ligand>
</feature>
<feature type="binding site" evidence="1">
    <location>
        <position position="419"/>
    </location>
    <ligand>
        <name>ATP</name>
        <dbReference type="ChEBI" id="CHEBI:30616"/>
    </ligand>
</feature>
<comment type="function">
    <text evidence="1">Catalyzes the covalent attachment of the prokaryotic ubiquitin-like protein modifier Pup to the proteasomal substrate proteins, thereby targeting them for proteasomal degradation. This tagging system is termed pupylation. The ligation reaction involves the side-chain carboxylate of the C-terminal glutamate of Pup and the side-chain amino group of a substrate lysine.</text>
</comment>
<comment type="catalytic activity">
    <reaction evidence="1">
        <text>ATP + [prokaryotic ubiquitin-like protein]-L-glutamate + [protein]-L-lysine = ADP + phosphate + N(6)-([prokaryotic ubiquitin-like protein]-gamma-L-glutamyl)-[protein]-L-lysine.</text>
        <dbReference type="EC" id="6.3.1.19"/>
    </reaction>
</comment>
<comment type="pathway">
    <text evidence="1">Protein degradation; proteasomal Pup-dependent pathway.</text>
</comment>
<comment type="pathway">
    <text evidence="1">Protein modification; protein pupylation.</text>
</comment>
<comment type="miscellaneous">
    <text evidence="1">The reaction mechanism probably proceeds via the activation of Pup by phosphorylation of its C-terminal glutamate, which is then subject to nucleophilic attack by the substrate lysine, resulting in an isopeptide bond and the release of phosphate as a good leaving group.</text>
</comment>
<comment type="similarity">
    <text evidence="1">Belongs to the Pup ligase/Pup deamidase family. Pup-conjugating enzyme subfamily.</text>
</comment>
<evidence type="ECO:0000255" key="1">
    <source>
        <dbReference type="HAMAP-Rule" id="MF_02111"/>
    </source>
</evidence>